<gene>
    <name evidence="1" type="primary">glpE</name>
    <name type="ordered locus">HAPS_1367</name>
</gene>
<comment type="function">
    <text evidence="1">Transferase that catalyzes the transfer of sulfur from thiosulfate to thiophilic acceptors such as cyanide or dithiols. May function in a CysM-independent thiosulfate assimilation pathway by catalyzing the conversion of thiosulfate to sulfite, which can then be used for L-cysteine biosynthesis.</text>
</comment>
<comment type="catalytic activity">
    <reaction evidence="1">
        <text>thiosulfate + hydrogen cyanide = thiocyanate + sulfite + 2 H(+)</text>
        <dbReference type="Rhea" id="RHEA:16881"/>
        <dbReference type="ChEBI" id="CHEBI:15378"/>
        <dbReference type="ChEBI" id="CHEBI:17359"/>
        <dbReference type="ChEBI" id="CHEBI:18022"/>
        <dbReference type="ChEBI" id="CHEBI:18407"/>
        <dbReference type="ChEBI" id="CHEBI:33542"/>
        <dbReference type="EC" id="2.8.1.1"/>
    </reaction>
</comment>
<comment type="catalytic activity">
    <reaction evidence="1">
        <text>thiosulfate + [thioredoxin]-dithiol = [thioredoxin]-disulfide + hydrogen sulfide + sulfite + 2 H(+)</text>
        <dbReference type="Rhea" id="RHEA:83859"/>
        <dbReference type="Rhea" id="RHEA-COMP:10698"/>
        <dbReference type="Rhea" id="RHEA-COMP:10700"/>
        <dbReference type="ChEBI" id="CHEBI:15378"/>
        <dbReference type="ChEBI" id="CHEBI:17359"/>
        <dbReference type="ChEBI" id="CHEBI:29919"/>
        <dbReference type="ChEBI" id="CHEBI:29950"/>
        <dbReference type="ChEBI" id="CHEBI:33542"/>
        <dbReference type="ChEBI" id="CHEBI:50058"/>
    </reaction>
</comment>
<comment type="subcellular location">
    <subcellularLocation>
        <location evidence="1">Cytoplasm</location>
    </subcellularLocation>
</comment>
<comment type="similarity">
    <text evidence="1">Belongs to the GlpE family.</text>
</comment>
<feature type="chain" id="PRO_1000148875" description="Thiosulfate sulfurtransferase GlpE">
    <location>
        <begin position="1"/>
        <end position="108"/>
    </location>
</feature>
<feature type="domain" description="Rhodanese" evidence="1">
    <location>
        <begin position="18"/>
        <end position="106"/>
    </location>
</feature>
<feature type="active site" description="Cysteine persulfide intermediate" evidence="1">
    <location>
        <position position="66"/>
    </location>
</feature>
<proteinExistence type="inferred from homology"/>
<sequence length="108" mass="12591">MEETFTEITPQQAWEMMQNEDAVLVDIRDMVRFSHSRPQGAFHLTNHSYGKFLDEYDYDEPVIVSCYHGVSSRNTAQYLVEQGFERVYSVKGGFEGWVRSELPIELGY</sequence>
<name>GLPE_GLAP5</name>
<accession>B8F6J5</accession>
<evidence type="ECO:0000255" key="1">
    <source>
        <dbReference type="HAMAP-Rule" id="MF_01009"/>
    </source>
</evidence>
<organism>
    <name type="scientific">Glaesserella parasuis serovar 5 (strain SH0165)</name>
    <name type="common">Haemophilus parasuis</name>
    <dbReference type="NCBI Taxonomy" id="557723"/>
    <lineage>
        <taxon>Bacteria</taxon>
        <taxon>Pseudomonadati</taxon>
        <taxon>Pseudomonadota</taxon>
        <taxon>Gammaproteobacteria</taxon>
        <taxon>Pasteurellales</taxon>
        <taxon>Pasteurellaceae</taxon>
        <taxon>Glaesserella</taxon>
    </lineage>
</organism>
<keyword id="KW-0963">Cytoplasm</keyword>
<keyword id="KW-1185">Reference proteome</keyword>
<keyword id="KW-0808">Transferase</keyword>
<dbReference type="EC" id="2.8.1.1" evidence="1"/>
<dbReference type="EMBL" id="CP001321">
    <property type="protein sequence ID" value="ACL32947.1"/>
    <property type="molecule type" value="Genomic_DNA"/>
</dbReference>
<dbReference type="RefSeq" id="WP_005713913.1">
    <property type="nucleotide sequence ID" value="NC_011852.1"/>
</dbReference>
<dbReference type="SMR" id="B8F6J5"/>
<dbReference type="STRING" id="557723.HAPS_1367"/>
<dbReference type="GeneID" id="66619448"/>
<dbReference type="KEGG" id="hap:HAPS_1367"/>
<dbReference type="HOGENOM" id="CLU_089574_14_0_6"/>
<dbReference type="Proteomes" id="UP000006743">
    <property type="component" value="Chromosome"/>
</dbReference>
<dbReference type="GO" id="GO:0005737">
    <property type="term" value="C:cytoplasm"/>
    <property type="evidence" value="ECO:0007669"/>
    <property type="project" value="UniProtKB-SubCell"/>
</dbReference>
<dbReference type="GO" id="GO:0004792">
    <property type="term" value="F:thiosulfate-cyanide sulfurtransferase activity"/>
    <property type="evidence" value="ECO:0007669"/>
    <property type="project" value="UniProtKB-UniRule"/>
</dbReference>
<dbReference type="GO" id="GO:0006071">
    <property type="term" value="P:glycerol metabolic process"/>
    <property type="evidence" value="ECO:0007669"/>
    <property type="project" value="UniProtKB-UniRule"/>
</dbReference>
<dbReference type="CDD" id="cd01444">
    <property type="entry name" value="GlpE_ST"/>
    <property type="match status" value="1"/>
</dbReference>
<dbReference type="Gene3D" id="3.40.250.10">
    <property type="entry name" value="Rhodanese-like domain"/>
    <property type="match status" value="1"/>
</dbReference>
<dbReference type="HAMAP" id="MF_01009">
    <property type="entry name" value="Thiosulf_sulfurtr"/>
    <property type="match status" value="1"/>
</dbReference>
<dbReference type="InterPro" id="IPR050229">
    <property type="entry name" value="GlpE_sulfurtransferase"/>
</dbReference>
<dbReference type="InterPro" id="IPR001763">
    <property type="entry name" value="Rhodanese-like_dom"/>
</dbReference>
<dbReference type="InterPro" id="IPR036873">
    <property type="entry name" value="Rhodanese-like_dom_sf"/>
</dbReference>
<dbReference type="InterPro" id="IPR023695">
    <property type="entry name" value="Thiosulf_sulfurTrfase"/>
</dbReference>
<dbReference type="NCBIfam" id="NF001195">
    <property type="entry name" value="PRK00162.1"/>
    <property type="match status" value="1"/>
</dbReference>
<dbReference type="PANTHER" id="PTHR43031">
    <property type="entry name" value="FAD-DEPENDENT OXIDOREDUCTASE"/>
    <property type="match status" value="1"/>
</dbReference>
<dbReference type="PANTHER" id="PTHR43031:SF6">
    <property type="entry name" value="THIOSULFATE SULFURTRANSFERASE GLPE"/>
    <property type="match status" value="1"/>
</dbReference>
<dbReference type="Pfam" id="PF00581">
    <property type="entry name" value="Rhodanese"/>
    <property type="match status" value="1"/>
</dbReference>
<dbReference type="SMART" id="SM00450">
    <property type="entry name" value="RHOD"/>
    <property type="match status" value="1"/>
</dbReference>
<dbReference type="SUPFAM" id="SSF52821">
    <property type="entry name" value="Rhodanese/Cell cycle control phosphatase"/>
    <property type="match status" value="1"/>
</dbReference>
<dbReference type="PROSITE" id="PS50206">
    <property type="entry name" value="RHODANESE_3"/>
    <property type="match status" value="1"/>
</dbReference>
<reference key="1">
    <citation type="journal article" date="2009" name="J. Bacteriol.">
        <title>Complete genome sequence of Haemophilus parasuis SH0165.</title>
        <authorList>
            <person name="Yue M."/>
            <person name="Yang F."/>
            <person name="Yang J."/>
            <person name="Bei W."/>
            <person name="Cai X."/>
            <person name="Chen L."/>
            <person name="Dong J."/>
            <person name="Zhou R."/>
            <person name="Jin M."/>
            <person name="Jin Q."/>
            <person name="Chen H."/>
        </authorList>
    </citation>
    <scope>NUCLEOTIDE SEQUENCE [LARGE SCALE GENOMIC DNA]</scope>
    <source>
        <strain>SH0165</strain>
    </source>
</reference>
<protein>
    <recommendedName>
        <fullName evidence="1">Thiosulfate sulfurtransferase GlpE</fullName>
        <ecNumber evidence="1">2.8.1.1</ecNumber>
    </recommendedName>
</protein>